<gene>
    <name evidence="1" type="primary">nusB</name>
    <name type="ordered locus">CLD_2751</name>
</gene>
<protein>
    <recommendedName>
        <fullName evidence="1">Transcription antitermination protein NusB</fullName>
    </recommendedName>
    <alternativeName>
        <fullName evidence="1">Antitermination factor NusB</fullName>
    </alternativeName>
</protein>
<dbReference type="EMBL" id="CP000939">
    <property type="protein sequence ID" value="ACA46138.1"/>
    <property type="molecule type" value="Genomic_DNA"/>
</dbReference>
<dbReference type="RefSeq" id="WP_003358828.1">
    <property type="nucleotide sequence ID" value="NC_010516.1"/>
</dbReference>
<dbReference type="SMR" id="B1IMN9"/>
<dbReference type="GeneID" id="5186053"/>
<dbReference type="KEGG" id="cbb:CLD_2751"/>
<dbReference type="HOGENOM" id="CLU_087843_3_1_9"/>
<dbReference type="Proteomes" id="UP000008541">
    <property type="component" value="Chromosome"/>
</dbReference>
<dbReference type="GO" id="GO:0005829">
    <property type="term" value="C:cytosol"/>
    <property type="evidence" value="ECO:0007669"/>
    <property type="project" value="TreeGrafter"/>
</dbReference>
<dbReference type="GO" id="GO:0003723">
    <property type="term" value="F:RNA binding"/>
    <property type="evidence" value="ECO:0007669"/>
    <property type="project" value="UniProtKB-UniRule"/>
</dbReference>
<dbReference type="GO" id="GO:0006353">
    <property type="term" value="P:DNA-templated transcription termination"/>
    <property type="evidence" value="ECO:0007669"/>
    <property type="project" value="UniProtKB-UniRule"/>
</dbReference>
<dbReference type="GO" id="GO:0031564">
    <property type="term" value="P:transcription antitermination"/>
    <property type="evidence" value="ECO:0007669"/>
    <property type="project" value="UniProtKB-KW"/>
</dbReference>
<dbReference type="FunFam" id="1.10.940.10:FF:000003">
    <property type="entry name" value="Transcription antitermination factor NusB"/>
    <property type="match status" value="1"/>
</dbReference>
<dbReference type="Gene3D" id="1.10.940.10">
    <property type="entry name" value="NusB-like"/>
    <property type="match status" value="1"/>
</dbReference>
<dbReference type="HAMAP" id="MF_00073">
    <property type="entry name" value="NusB"/>
    <property type="match status" value="1"/>
</dbReference>
<dbReference type="InterPro" id="IPR035926">
    <property type="entry name" value="NusB-like_sf"/>
</dbReference>
<dbReference type="InterPro" id="IPR011605">
    <property type="entry name" value="NusB_fam"/>
</dbReference>
<dbReference type="InterPro" id="IPR006027">
    <property type="entry name" value="NusB_RsmB_TIM44"/>
</dbReference>
<dbReference type="NCBIfam" id="TIGR01951">
    <property type="entry name" value="nusB"/>
    <property type="match status" value="1"/>
</dbReference>
<dbReference type="PANTHER" id="PTHR11078:SF3">
    <property type="entry name" value="ANTITERMINATION NUSB DOMAIN-CONTAINING PROTEIN"/>
    <property type="match status" value="1"/>
</dbReference>
<dbReference type="PANTHER" id="PTHR11078">
    <property type="entry name" value="N UTILIZATION SUBSTANCE PROTEIN B-RELATED"/>
    <property type="match status" value="1"/>
</dbReference>
<dbReference type="Pfam" id="PF01029">
    <property type="entry name" value="NusB"/>
    <property type="match status" value="1"/>
</dbReference>
<dbReference type="SUPFAM" id="SSF48013">
    <property type="entry name" value="NusB-like"/>
    <property type="match status" value="1"/>
</dbReference>
<accession>B1IMN9</accession>
<organism>
    <name type="scientific">Clostridium botulinum (strain Okra / Type B1)</name>
    <dbReference type="NCBI Taxonomy" id="498213"/>
    <lineage>
        <taxon>Bacteria</taxon>
        <taxon>Bacillati</taxon>
        <taxon>Bacillota</taxon>
        <taxon>Clostridia</taxon>
        <taxon>Eubacteriales</taxon>
        <taxon>Clostridiaceae</taxon>
        <taxon>Clostridium</taxon>
    </lineage>
</organism>
<evidence type="ECO:0000255" key="1">
    <source>
        <dbReference type="HAMAP-Rule" id="MF_00073"/>
    </source>
</evidence>
<reference key="1">
    <citation type="journal article" date="2007" name="PLoS ONE">
        <title>Analysis of the neurotoxin complex genes in Clostridium botulinum A1-A4 and B1 strains: BoNT/A3, /Ba4 and /B1 clusters are located within plasmids.</title>
        <authorList>
            <person name="Smith T.J."/>
            <person name="Hill K.K."/>
            <person name="Foley B.T."/>
            <person name="Detter J.C."/>
            <person name="Munk A.C."/>
            <person name="Bruce D.C."/>
            <person name="Doggett N.A."/>
            <person name="Smith L.A."/>
            <person name="Marks J.D."/>
            <person name="Xie G."/>
            <person name="Brettin T.S."/>
        </authorList>
    </citation>
    <scope>NUCLEOTIDE SEQUENCE [LARGE SCALE GENOMIC DNA]</scope>
    <source>
        <strain>Okra / Type B1</strain>
    </source>
</reference>
<feature type="chain" id="PRO_1000092543" description="Transcription antitermination protein NusB">
    <location>
        <begin position="1"/>
        <end position="143"/>
    </location>
</feature>
<comment type="function">
    <text evidence="1">Involved in transcription antitermination. Required for transcription of ribosomal RNA (rRNA) genes. Binds specifically to the boxA antiterminator sequence of the ribosomal RNA (rrn) operons.</text>
</comment>
<comment type="similarity">
    <text evidence="1">Belongs to the NusB family.</text>
</comment>
<keyword id="KW-0694">RNA-binding</keyword>
<keyword id="KW-0804">Transcription</keyword>
<keyword id="KW-0889">Transcription antitermination</keyword>
<keyword id="KW-0805">Transcription regulation</keyword>
<sequence length="143" mass="16711">MNRRKSREVAMRLLFQTTLNGENLEEALENLKDVRESEEITKEKDYESVDLKDVDIDYVKRIIKGIEENKEEIDEKIKGNLKNWKIERLSKVDLSILRLCTYELKFEEDIPNRVSVNEAIELAKKYSGEKSATFINGVLGKMI</sequence>
<proteinExistence type="inferred from homology"/>
<name>NUSB_CLOBK</name>